<name>AAPT1_ARATH</name>
<accession>O82567</accession>
<sequence>MGYIGAHGVAALHRYKYSGVDHSYLAKYVLQPFWTRFVKVFPLWMPPNMITLMGFMFLVTSSLLGYIYSPQLDSPPPRWVHFAHGLLLFLYQTFDAVDGKQARRTNSSSPLGELFDHGCDALACAFEAMAFGSTAMCGRDTFWFWVISAIPFYGATWEHYFTNTLILPVINGPTEGLALIFVSHFFTAIVGAEWWAQQLGQSIPLFSWVPFVNEIQTSRAVLYMMIAFAVIPTVAFNVTNVYKVVRSRNGSMVLALAMLYPFVVLLGGVLIWDYLSPINLIATYPHLVVLGTGLAFGFLVGRMILAHLCDEPKGLKTNMCMSLLYLPFALANALTARLNAGVPLVDELWVLLGYCIFTVSLYLHFATSVIHEITEALGIYCFRITRKEA</sequence>
<reference key="1">
    <citation type="journal article" date="1999" name="Plant Physiol. Biochem.">
        <title>Characterization of aminoalcoholphosphotransferases from Arabidopsis thaliana and soybean.</title>
        <authorList>
            <person name="Dewey R.E."/>
            <person name="Goode J.H."/>
        </authorList>
    </citation>
    <scope>NUCLEOTIDE SEQUENCE [MRNA]</scope>
    <scope>FUNCTION</scope>
    <scope>CATALYTIC ACTIVITY</scope>
</reference>
<reference key="2">
    <citation type="journal article" date="2000" name="Nature">
        <title>Sequence and analysis of chromosome 1 of the plant Arabidopsis thaliana.</title>
        <authorList>
            <person name="Theologis A."/>
            <person name="Ecker J.R."/>
            <person name="Palm C.J."/>
            <person name="Federspiel N.A."/>
            <person name="Kaul S."/>
            <person name="White O."/>
            <person name="Alonso J."/>
            <person name="Altafi H."/>
            <person name="Araujo R."/>
            <person name="Bowman C.L."/>
            <person name="Brooks S.Y."/>
            <person name="Buehler E."/>
            <person name="Chan A."/>
            <person name="Chao Q."/>
            <person name="Chen H."/>
            <person name="Cheuk R.F."/>
            <person name="Chin C.W."/>
            <person name="Chung M.K."/>
            <person name="Conn L."/>
            <person name="Conway A.B."/>
            <person name="Conway A.R."/>
            <person name="Creasy T.H."/>
            <person name="Dewar K."/>
            <person name="Dunn P."/>
            <person name="Etgu P."/>
            <person name="Feldblyum T.V."/>
            <person name="Feng J.-D."/>
            <person name="Fong B."/>
            <person name="Fujii C.Y."/>
            <person name="Gill J.E."/>
            <person name="Goldsmith A.D."/>
            <person name="Haas B."/>
            <person name="Hansen N.F."/>
            <person name="Hughes B."/>
            <person name="Huizar L."/>
            <person name="Hunter J.L."/>
            <person name="Jenkins J."/>
            <person name="Johnson-Hopson C."/>
            <person name="Khan S."/>
            <person name="Khaykin E."/>
            <person name="Kim C.J."/>
            <person name="Koo H.L."/>
            <person name="Kremenetskaia I."/>
            <person name="Kurtz D.B."/>
            <person name="Kwan A."/>
            <person name="Lam B."/>
            <person name="Langin-Hooper S."/>
            <person name="Lee A."/>
            <person name="Lee J.M."/>
            <person name="Lenz C.A."/>
            <person name="Li J.H."/>
            <person name="Li Y.-P."/>
            <person name="Lin X."/>
            <person name="Liu S.X."/>
            <person name="Liu Z.A."/>
            <person name="Luros J.S."/>
            <person name="Maiti R."/>
            <person name="Marziali A."/>
            <person name="Militscher J."/>
            <person name="Miranda M."/>
            <person name="Nguyen M."/>
            <person name="Nierman W.C."/>
            <person name="Osborne B.I."/>
            <person name="Pai G."/>
            <person name="Peterson J."/>
            <person name="Pham P.K."/>
            <person name="Rizzo M."/>
            <person name="Rooney T."/>
            <person name="Rowley D."/>
            <person name="Sakano H."/>
            <person name="Salzberg S.L."/>
            <person name="Schwartz J.R."/>
            <person name="Shinn P."/>
            <person name="Southwick A.M."/>
            <person name="Sun H."/>
            <person name="Tallon L.J."/>
            <person name="Tambunga G."/>
            <person name="Toriumi M.J."/>
            <person name="Town C.D."/>
            <person name="Utterback T."/>
            <person name="Van Aken S."/>
            <person name="Vaysberg M."/>
            <person name="Vysotskaia V.S."/>
            <person name="Walker M."/>
            <person name="Wu D."/>
            <person name="Yu G."/>
            <person name="Fraser C.M."/>
            <person name="Venter J.C."/>
            <person name="Davis R.W."/>
        </authorList>
    </citation>
    <scope>NUCLEOTIDE SEQUENCE [LARGE SCALE GENOMIC DNA]</scope>
    <source>
        <strain>cv. Columbia</strain>
    </source>
</reference>
<reference key="3">
    <citation type="journal article" date="2017" name="Plant J.">
        <title>Araport11: a complete reannotation of the Arabidopsis thaliana reference genome.</title>
        <authorList>
            <person name="Cheng C.Y."/>
            <person name="Krishnakumar V."/>
            <person name="Chan A.P."/>
            <person name="Thibaud-Nissen F."/>
            <person name="Schobel S."/>
            <person name="Town C.D."/>
        </authorList>
    </citation>
    <scope>GENOME REANNOTATION</scope>
    <source>
        <strain>cv. Columbia</strain>
    </source>
</reference>
<reference key="4">
    <citation type="journal article" date="2003" name="Science">
        <title>Empirical analysis of transcriptional activity in the Arabidopsis genome.</title>
        <authorList>
            <person name="Yamada K."/>
            <person name="Lim J."/>
            <person name="Dale J.M."/>
            <person name="Chen H."/>
            <person name="Shinn P."/>
            <person name="Palm C.J."/>
            <person name="Southwick A.M."/>
            <person name="Wu H.C."/>
            <person name="Kim C.J."/>
            <person name="Nguyen M."/>
            <person name="Pham P.K."/>
            <person name="Cheuk R.F."/>
            <person name="Karlin-Newmann G."/>
            <person name="Liu S.X."/>
            <person name="Lam B."/>
            <person name="Sakano H."/>
            <person name="Wu T."/>
            <person name="Yu G."/>
            <person name="Miranda M."/>
            <person name="Quach H.L."/>
            <person name="Tripp M."/>
            <person name="Chang C.H."/>
            <person name="Lee J.M."/>
            <person name="Toriumi M.J."/>
            <person name="Chan M.M."/>
            <person name="Tang C.C."/>
            <person name="Onodera C.S."/>
            <person name="Deng J.M."/>
            <person name="Akiyama K."/>
            <person name="Ansari Y."/>
            <person name="Arakawa T."/>
            <person name="Banh J."/>
            <person name="Banno F."/>
            <person name="Bowser L."/>
            <person name="Brooks S.Y."/>
            <person name="Carninci P."/>
            <person name="Chao Q."/>
            <person name="Choy N."/>
            <person name="Enju A."/>
            <person name="Goldsmith A.D."/>
            <person name="Gurjal M."/>
            <person name="Hansen N.F."/>
            <person name="Hayashizaki Y."/>
            <person name="Johnson-Hopson C."/>
            <person name="Hsuan V.W."/>
            <person name="Iida K."/>
            <person name="Karnes M."/>
            <person name="Khan S."/>
            <person name="Koesema E."/>
            <person name="Ishida J."/>
            <person name="Jiang P.X."/>
            <person name="Jones T."/>
            <person name="Kawai J."/>
            <person name="Kamiya A."/>
            <person name="Meyers C."/>
            <person name="Nakajima M."/>
            <person name="Narusaka M."/>
            <person name="Seki M."/>
            <person name="Sakurai T."/>
            <person name="Satou M."/>
            <person name="Tamse R."/>
            <person name="Vaysberg M."/>
            <person name="Wallender E.K."/>
            <person name="Wong C."/>
            <person name="Yamamura Y."/>
            <person name="Yuan S."/>
            <person name="Shinozaki K."/>
            <person name="Davis R.W."/>
            <person name="Theologis A."/>
            <person name="Ecker J.R."/>
        </authorList>
    </citation>
    <scope>NUCLEOTIDE SEQUENCE [LARGE SCALE MRNA]</scope>
    <source>
        <strain>cv. Columbia</strain>
    </source>
</reference>
<dbReference type="EC" id="2.7.8.1"/>
<dbReference type="EC" id="2.7.8.2"/>
<dbReference type="EMBL" id="AF091843">
    <property type="protein sequence ID" value="AAC61768.1"/>
    <property type="molecule type" value="mRNA"/>
</dbReference>
<dbReference type="EMBL" id="AC027134">
    <property type="protein sequence ID" value="AAF99823.1"/>
    <property type="molecule type" value="Genomic_DNA"/>
</dbReference>
<dbReference type="EMBL" id="CP002684">
    <property type="protein sequence ID" value="AEE29034.1"/>
    <property type="molecule type" value="Genomic_DNA"/>
</dbReference>
<dbReference type="EMBL" id="AY080725">
    <property type="protein sequence ID" value="AAL86327.1"/>
    <property type="molecule type" value="mRNA"/>
</dbReference>
<dbReference type="EMBL" id="AY114062">
    <property type="protein sequence ID" value="AAM45110.1"/>
    <property type="molecule type" value="mRNA"/>
</dbReference>
<dbReference type="PIR" id="F86268">
    <property type="entry name" value="F86268"/>
</dbReference>
<dbReference type="RefSeq" id="NP_172813.1">
    <molecule id="O82567-1"/>
    <property type="nucleotide sequence ID" value="NM_101226.5"/>
</dbReference>
<dbReference type="SMR" id="O82567"/>
<dbReference type="BioGRID" id="23157">
    <property type="interactions" value="4"/>
</dbReference>
<dbReference type="FunCoup" id="O82567">
    <property type="interactions" value="3965"/>
</dbReference>
<dbReference type="IntAct" id="O82567">
    <property type="interactions" value="4"/>
</dbReference>
<dbReference type="STRING" id="3702.O82567"/>
<dbReference type="TCDB" id="4.F.1.1.2">
    <property type="family name" value="the choline/ethanolaminephosphotransferase 1 (cept1) family"/>
</dbReference>
<dbReference type="PaxDb" id="3702-AT1G13560.1"/>
<dbReference type="ProteomicsDB" id="245119">
    <molecule id="O82567-1"/>
</dbReference>
<dbReference type="EnsemblPlants" id="AT1G13560.1">
    <molecule id="O82567-1"/>
    <property type="protein sequence ID" value="AT1G13560.1"/>
    <property type="gene ID" value="AT1G13560"/>
</dbReference>
<dbReference type="GeneID" id="837917"/>
<dbReference type="Gramene" id="AT1G13560.1">
    <molecule id="O82567-1"/>
    <property type="protein sequence ID" value="AT1G13560.1"/>
    <property type="gene ID" value="AT1G13560"/>
</dbReference>
<dbReference type="KEGG" id="ath:AT1G13560"/>
<dbReference type="Araport" id="AT1G13560"/>
<dbReference type="TAIR" id="AT1G13560">
    <property type="gene designation" value="AAPT1"/>
</dbReference>
<dbReference type="eggNOG" id="KOG2877">
    <property type="taxonomic scope" value="Eukaryota"/>
</dbReference>
<dbReference type="HOGENOM" id="CLU_035066_0_1_1"/>
<dbReference type="InParanoid" id="O82567"/>
<dbReference type="OMA" id="RMYFILW"/>
<dbReference type="PhylomeDB" id="O82567"/>
<dbReference type="BioCyc" id="ARA:AT1G13560-MONOMER"/>
<dbReference type="BRENDA" id="2.7.8.1">
    <property type="organism ID" value="399"/>
</dbReference>
<dbReference type="BRENDA" id="2.7.8.2">
    <property type="organism ID" value="399"/>
</dbReference>
<dbReference type="UniPathway" id="UPA00558">
    <property type="reaction ID" value="UER00743"/>
</dbReference>
<dbReference type="UniPathway" id="UPA00753">
    <property type="reaction ID" value="UER00740"/>
</dbReference>
<dbReference type="PRO" id="PR:O82567"/>
<dbReference type="Proteomes" id="UP000006548">
    <property type="component" value="Chromosome 1"/>
</dbReference>
<dbReference type="ExpressionAtlas" id="O82567">
    <property type="expression patterns" value="baseline and differential"/>
</dbReference>
<dbReference type="GO" id="GO:0005794">
    <property type="term" value="C:Golgi apparatus"/>
    <property type="evidence" value="ECO:0007005"/>
    <property type="project" value="TAIR"/>
</dbReference>
<dbReference type="GO" id="GO:0016020">
    <property type="term" value="C:membrane"/>
    <property type="evidence" value="ECO:0007669"/>
    <property type="project" value="UniProtKB-SubCell"/>
</dbReference>
<dbReference type="GO" id="GO:0004142">
    <property type="term" value="F:diacylglycerol cholinephosphotransferase activity"/>
    <property type="evidence" value="ECO:0007669"/>
    <property type="project" value="UniProtKB-EC"/>
</dbReference>
<dbReference type="GO" id="GO:0004307">
    <property type="term" value="F:ethanolaminephosphotransferase activity"/>
    <property type="evidence" value="ECO:0007669"/>
    <property type="project" value="UniProtKB-EC"/>
</dbReference>
<dbReference type="GO" id="GO:0046872">
    <property type="term" value="F:metal ion binding"/>
    <property type="evidence" value="ECO:0007669"/>
    <property type="project" value="UniProtKB-KW"/>
</dbReference>
<dbReference type="GO" id="GO:0006646">
    <property type="term" value="P:phosphatidylethanolamine biosynthetic process"/>
    <property type="evidence" value="ECO:0007669"/>
    <property type="project" value="UniProtKB-UniPathway"/>
</dbReference>
<dbReference type="FunFam" id="1.20.120.1760:FF:000014">
    <property type="entry name" value="Choline/ethanolaminephosphotransferase 1"/>
    <property type="match status" value="1"/>
</dbReference>
<dbReference type="Gene3D" id="1.20.120.1760">
    <property type="match status" value="1"/>
</dbReference>
<dbReference type="InterPro" id="IPR000462">
    <property type="entry name" value="CDP-OH_P_trans"/>
</dbReference>
<dbReference type="InterPro" id="IPR043130">
    <property type="entry name" value="CDP-OH_PTrfase_TM_dom"/>
</dbReference>
<dbReference type="InterPro" id="IPR048254">
    <property type="entry name" value="CDP_ALCOHOL_P_TRANSF_CS"/>
</dbReference>
<dbReference type="InterPro" id="IPR014472">
    <property type="entry name" value="CHOPT"/>
</dbReference>
<dbReference type="PANTHER" id="PTHR10414:SF37">
    <property type="entry name" value="BB IN A BOXCAR, ISOFORM C"/>
    <property type="match status" value="1"/>
</dbReference>
<dbReference type="PANTHER" id="PTHR10414">
    <property type="entry name" value="ETHANOLAMINEPHOSPHOTRANSFERASE"/>
    <property type="match status" value="1"/>
</dbReference>
<dbReference type="Pfam" id="PF01066">
    <property type="entry name" value="CDP-OH_P_transf"/>
    <property type="match status" value="1"/>
</dbReference>
<dbReference type="PIRSF" id="PIRSF015665">
    <property type="entry name" value="CHOPT"/>
    <property type="match status" value="1"/>
</dbReference>
<dbReference type="PROSITE" id="PS00379">
    <property type="entry name" value="CDP_ALCOHOL_P_TRANSF"/>
    <property type="match status" value="1"/>
</dbReference>
<keyword id="KW-0025">Alternative splicing</keyword>
<keyword id="KW-0444">Lipid biosynthesis</keyword>
<keyword id="KW-0443">Lipid metabolism</keyword>
<keyword id="KW-0460">Magnesium</keyword>
<keyword id="KW-0464">Manganese</keyword>
<keyword id="KW-0472">Membrane</keyword>
<keyword id="KW-0479">Metal-binding</keyword>
<keyword id="KW-0594">Phospholipid biosynthesis</keyword>
<keyword id="KW-1208">Phospholipid metabolism</keyword>
<keyword id="KW-1185">Reference proteome</keyword>
<keyword id="KW-0808">Transferase</keyword>
<keyword id="KW-0812">Transmembrane</keyword>
<keyword id="KW-1133">Transmembrane helix</keyword>
<gene>
    <name type="primary">AAPT1</name>
    <name type="ordered locus">At1g13560</name>
    <name type="ORF">F13B4.5</name>
</gene>
<comment type="function">
    <text evidence="4">Catalyzes both phosphatidylcholine and phosphatidylethanolamine biosynthesis from CDP-choline and CDP-ethanolamine, respectively. Has a higher cholinephosphotransferase activity than ethanolaminephosphotransferase activity.</text>
</comment>
<comment type="catalytic activity">
    <reaction evidence="4">
        <text>CDP-ethanolamine + a 1,2-diacyl-sn-glycerol = a 1,2-diacyl-sn-glycero-3-phosphoethanolamine + CMP + H(+)</text>
        <dbReference type="Rhea" id="RHEA:32943"/>
        <dbReference type="ChEBI" id="CHEBI:15378"/>
        <dbReference type="ChEBI" id="CHEBI:17815"/>
        <dbReference type="ChEBI" id="CHEBI:57876"/>
        <dbReference type="ChEBI" id="CHEBI:60377"/>
        <dbReference type="ChEBI" id="CHEBI:64612"/>
        <dbReference type="EC" id="2.7.8.1"/>
    </reaction>
</comment>
<comment type="catalytic activity">
    <reaction evidence="4">
        <text>CDP-choline + a 1,2-diacyl-sn-glycerol = a 1,2-diacyl-sn-glycero-3-phosphocholine + CMP + H(+)</text>
        <dbReference type="Rhea" id="RHEA:32939"/>
        <dbReference type="ChEBI" id="CHEBI:15378"/>
        <dbReference type="ChEBI" id="CHEBI:17815"/>
        <dbReference type="ChEBI" id="CHEBI:57643"/>
        <dbReference type="ChEBI" id="CHEBI:58779"/>
        <dbReference type="ChEBI" id="CHEBI:60377"/>
        <dbReference type="EC" id="2.7.8.2"/>
    </reaction>
</comment>
<comment type="cofactor">
    <cofactor evidence="1">
        <name>Mg(2+)</name>
        <dbReference type="ChEBI" id="CHEBI:18420"/>
    </cofactor>
    <cofactor evidence="1">
        <name>Mn(2+)</name>
        <dbReference type="ChEBI" id="CHEBI:29035"/>
    </cofactor>
</comment>
<comment type="pathway">
    <text>Phospholipid metabolism; phosphatidylethanolamine biosynthesis; phosphatidylethanolamine from ethanolamine: step 3/3.</text>
</comment>
<comment type="pathway">
    <text>Phospholipid metabolism; phosphatidylcholine biosynthesis; phosphatidylcholine from phosphocholine: step 2/2.</text>
</comment>
<comment type="subcellular location">
    <subcellularLocation>
        <location evidence="5">Membrane</location>
        <topology evidence="5">Multi-pass membrane protein</topology>
    </subcellularLocation>
</comment>
<comment type="alternative products">
    <event type="alternative splicing"/>
    <isoform>
        <id>O82567-1</id>
        <name>1</name>
        <sequence type="displayed"/>
    </isoform>
    <text>A number of isoforms are produced. According to EST sequences.</text>
</comment>
<comment type="similarity">
    <text evidence="5">Belongs to the CDP-alcohol phosphatidyltransferase class-I family.</text>
</comment>
<organism>
    <name type="scientific">Arabidopsis thaliana</name>
    <name type="common">Mouse-ear cress</name>
    <dbReference type="NCBI Taxonomy" id="3702"/>
    <lineage>
        <taxon>Eukaryota</taxon>
        <taxon>Viridiplantae</taxon>
        <taxon>Streptophyta</taxon>
        <taxon>Embryophyta</taxon>
        <taxon>Tracheophyta</taxon>
        <taxon>Spermatophyta</taxon>
        <taxon>Magnoliopsida</taxon>
        <taxon>eudicotyledons</taxon>
        <taxon>Gunneridae</taxon>
        <taxon>Pentapetalae</taxon>
        <taxon>rosids</taxon>
        <taxon>malvids</taxon>
        <taxon>Brassicales</taxon>
        <taxon>Brassicaceae</taxon>
        <taxon>Camelineae</taxon>
        <taxon>Arabidopsis</taxon>
    </lineage>
</organism>
<proteinExistence type="evidence at protein level"/>
<protein>
    <recommendedName>
        <fullName>Choline/ethanolaminephosphotransferase 1</fullName>
        <ecNumber>2.7.8.1</ecNumber>
        <ecNumber>2.7.8.2</ecNumber>
    </recommendedName>
    <alternativeName>
        <fullName>Aminoalcohol phosphotransferase 1</fullName>
        <shortName>AtAAPT1</shortName>
    </alternativeName>
</protein>
<feature type="chain" id="PRO_0000423344" description="Choline/ethanolaminephosphotransferase 1">
    <location>
        <begin position="1"/>
        <end position="389"/>
    </location>
</feature>
<feature type="transmembrane region" description="Helical" evidence="3">
    <location>
        <begin position="40"/>
        <end position="60"/>
    </location>
</feature>
<feature type="transmembrane region" description="Helical" evidence="3">
    <location>
        <begin position="141"/>
        <end position="161"/>
    </location>
</feature>
<feature type="transmembrane region" description="Helical" evidence="3">
    <location>
        <begin position="176"/>
        <end position="196"/>
    </location>
</feature>
<feature type="transmembrane region" description="Helical" evidence="3">
    <location>
        <begin position="221"/>
        <end position="241"/>
    </location>
</feature>
<feature type="transmembrane region" description="Helical" evidence="3">
    <location>
        <begin position="252"/>
        <end position="272"/>
    </location>
</feature>
<feature type="transmembrane region" description="Helical" evidence="3">
    <location>
        <begin position="280"/>
        <end position="300"/>
    </location>
</feature>
<feature type="transmembrane region" description="Helical" evidence="3">
    <location>
        <begin position="322"/>
        <end position="344"/>
    </location>
</feature>
<feature type="transmembrane region" description="Helical" evidence="3">
    <location>
        <begin position="350"/>
        <end position="370"/>
    </location>
</feature>
<feature type="active site" description="Proton acceptor" evidence="2">
    <location>
        <position position="117"/>
    </location>
</feature>
<feature type="binding site" evidence="2">
    <location>
        <position position="48"/>
    </location>
    <ligand>
        <name>CDP-choline</name>
        <dbReference type="ChEBI" id="CHEBI:58779"/>
    </ligand>
</feature>
<feature type="binding site" evidence="2">
    <location>
        <position position="95"/>
    </location>
    <ligand>
        <name>Mg(2+)</name>
        <dbReference type="ChEBI" id="CHEBI:18420"/>
        <label>1</label>
    </ligand>
</feature>
<feature type="binding site" evidence="2">
    <location>
        <position position="95"/>
    </location>
    <ligand>
        <name>Mg(2+)</name>
        <dbReference type="ChEBI" id="CHEBI:18420"/>
        <label>2</label>
    </ligand>
</feature>
<feature type="binding site" evidence="2">
    <location>
        <position position="98"/>
    </location>
    <ligand>
        <name>Mg(2+)</name>
        <dbReference type="ChEBI" id="CHEBI:18420"/>
        <label>1</label>
    </ligand>
</feature>
<feature type="binding site" evidence="2">
    <location>
        <position position="103"/>
    </location>
    <ligand>
        <name>CDP-choline</name>
        <dbReference type="ChEBI" id="CHEBI:58779"/>
    </ligand>
</feature>
<feature type="binding site" evidence="2">
    <location>
        <position position="116"/>
    </location>
    <ligand>
        <name>Mg(2+)</name>
        <dbReference type="ChEBI" id="CHEBI:18420"/>
        <label>1</label>
    </ligand>
</feature>
<feature type="binding site" evidence="2">
    <location>
        <position position="116"/>
    </location>
    <ligand>
        <name>Mg(2+)</name>
        <dbReference type="ChEBI" id="CHEBI:18420"/>
        <label>2</label>
    </ligand>
</feature>
<feature type="binding site" evidence="2">
    <location>
        <position position="120"/>
    </location>
    <ligand>
        <name>Mg(2+)</name>
        <dbReference type="ChEBI" id="CHEBI:18420"/>
        <label>2</label>
    </ligand>
</feature>
<feature type="site" description="Increases basicity of active site His" evidence="2">
    <location>
        <position position="113"/>
    </location>
</feature>
<evidence type="ECO:0000250" key="1"/>
<evidence type="ECO:0000250" key="2">
    <source>
        <dbReference type="UniProtKB" id="Q4KLV1"/>
    </source>
</evidence>
<evidence type="ECO:0000255" key="3"/>
<evidence type="ECO:0000269" key="4">
    <source ref="1"/>
</evidence>
<evidence type="ECO:0000305" key="5"/>